<sequence>MRHRKAYRKLSKPTPQRKALFKALLISLFKHGKIVTTLPRAKEVTRIAEKLLTIAKEDSVHHRRLVYAWLQDRELVRKVFVEIAPKYKDRNGGYIRILKLGMRRGDAAEQAVIEFV</sequence>
<evidence type="ECO:0000255" key="1">
    <source>
        <dbReference type="HAMAP-Rule" id="MF_01368"/>
    </source>
</evidence>
<evidence type="ECO:0000305" key="2"/>
<gene>
    <name evidence="1" type="primary">rplQ</name>
    <name type="ordered locus">Dtur_1009</name>
</gene>
<feature type="chain" id="PRO_1000144415" description="Large ribosomal subunit protein bL17">
    <location>
        <begin position="1"/>
        <end position="116"/>
    </location>
</feature>
<proteinExistence type="inferred from homology"/>
<protein>
    <recommendedName>
        <fullName evidence="1">Large ribosomal subunit protein bL17</fullName>
    </recommendedName>
    <alternativeName>
        <fullName evidence="2">50S ribosomal protein L17</fullName>
    </alternativeName>
</protein>
<comment type="subunit">
    <text evidence="1">Part of the 50S ribosomal subunit. Contacts protein L32.</text>
</comment>
<comment type="similarity">
    <text evidence="1">Belongs to the bacterial ribosomal protein bL17 family.</text>
</comment>
<dbReference type="EMBL" id="CP001251">
    <property type="protein sequence ID" value="ACK42289.1"/>
    <property type="molecule type" value="Genomic_DNA"/>
</dbReference>
<dbReference type="RefSeq" id="WP_012583372.1">
    <property type="nucleotide sequence ID" value="NC_011661.1"/>
</dbReference>
<dbReference type="RefSeq" id="YP_002352903.1">
    <property type="nucleotide sequence ID" value="NC_011661.1"/>
</dbReference>
<dbReference type="SMR" id="B8E1G1"/>
<dbReference type="FunCoup" id="B8E1G1">
    <property type="interactions" value="354"/>
</dbReference>
<dbReference type="STRING" id="515635.Dtur_1009"/>
<dbReference type="EnsemblBacteria" id="ACK42289">
    <property type="protein sequence ID" value="ACK42289"/>
    <property type="gene ID" value="Dtur_1009"/>
</dbReference>
<dbReference type="KEGG" id="dtu:Dtur_1009"/>
<dbReference type="PATRIC" id="fig|515635.4.peg.1046"/>
<dbReference type="eggNOG" id="COG0203">
    <property type="taxonomic scope" value="Bacteria"/>
</dbReference>
<dbReference type="HOGENOM" id="CLU_074407_2_0_0"/>
<dbReference type="InParanoid" id="B8E1G1"/>
<dbReference type="OrthoDB" id="9809073at2"/>
<dbReference type="Proteomes" id="UP000007719">
    <property type="component" value="Chromosome"/>
</dbReference>
<dbReference type="GO" id="GO:0022625">
    <property type="term" value="C:cytosolic large ribosomal subunit"/>
    <property type="evidence" value="ECO:0000318"/>
    <property type="project" value="GO_Central"/>
</dbReference>
<dbReference type="GO" id="GO:0003735">
    <property type="term" value="F:structural constituent of ribosome"/>
    <property type="evidence" value="ECO:0000318"/>
    <property type="project" value="GO_Central"/>
</dbReference>
<dbReference type="GO" id="GO:0006412">
    <property type="term" value="P:translation"/>
    <property type="evidence" value="ECO:0007669"/>
    <property type="project" value="UniProtKB-UniRule"/>
</dbReference>
<dbReference type="FunFam" id="3.90.1030.10:FF:000003">
    <property type="entry name" value="50S ribosomal protein L17"/>
    <property type="match status" value="1"/>
</dbReference>
<dbReference type="Gene3D" id="3.90.1030.10">
    <property type="entry name" value="Ribosomal protein L17"/>
    <property type="match status" value="1"/>
</dbReference>
<dbReference type="HAMAP" id="MF_01368">
    <property type="entry name" value="Ribosomal_bL17"/>
    <property type="match status" value="1"/>
</dbReference>
<dbReference type="InterPro" id="IPR000456">
    <property type="entry name" value="Ribosomal_bL17"/>
</dbReference>
<dbReference type="InterPro" id="IPR047859">
    <property type="entry name" value="Ribosomal_bL17_CS"/>
</dbReference>
<dbReference type="InterPro" id="IPR036373">
    <property type="entry name" value="Ribosomal_bL17_sf"/>
</dbReference>
<dbReference type="NCBIfam" id="TIGR00059">
    <property type="entry name" value="L17"/>
    <property type="match status" value="1"/>
</dbReference>
<dbReference type="PANTHER" id="PTHR14413:SF16">
    <property type="entry name" value="LARGE RIBOSOMAL SUBUNIT PROTEIN BL17M"/>
    <property type="match status" value="1"/>
</dbReference>
<dbReference type="PANTHER" id="PTHR14413">
    <property type="entry name" value="RIBOSOMAL PROTEIN L17"/>
    <property type="match status" value="1"/>
</dbReference>
<dbReference type="Pfam" id="PF01196">
    <property type="entry name" value="Ribosomal_L17"/>
    <property type="match status" value="1"/>
</dbReference>
<dbReference type="SUPFAM" id="SSF64263">
    <property type="entry name" value="Prokaryotic ribosomal protein L17"/>
    <property type="match status" value="1"/>
</dbReference>
<dbReference type="PROSITE" id="PS01167">
    <property type="entry name" value="RIBOSOMAL_L17"/>
    <property type="match status" value="1"/>
</dbReference>
<keyword id="KW-1185">Reference proteome</keyword>
<keyword id="KW-0687">Ribonucleoprotein</keyword>
<keyword id="KW-0689">Ribosomal protein</keyword>
<reference key="1">
    <citation type="journal article" date="2016" name="Front. Microbiol.">
        <title>The complete genome sequence of hyperthermophile Dictyoglomus turgidum DSM 6724 reveals a specialized carbohydrate fermentor.</title>
        <authorList>
            <person name="Brumm P.J."/>
            <person name="Gowda K."/>
            <person name="Robb F.T."/>
            <person name="Mead D.A."/>
        </authorList>
    </citation>
    <scope>NUCLEOTIDE SEQUENCE [LARGE SCALE GENOMIC DNA]</scope>
    <source>
        <strain>DSM 6724 / Z-1310</strain>
    </source>
</reference>
<name>RL17_DICTD</name>
<accession>B8E1G1</accession>
<organism>
    <name type="scientific">Dictyoglomus turgidum (strain DSM 6724 / Z-1310)</name>
    <dbReference type="NCBI Taxonomy" id="515635"/>
    <lineage>
        <taxon>Bacteria</taxon>
        <taxon>Pseudomonadati</taxon>
        <taxon>Dictyoglomota</taxon>
        <taxon>Dictyoglomia</taxon>
        <taxon>Dictyoglomales</taxon>
        <taxon>Dictyoglomaceae</taxon>
        <taxon>Dictyoglomus</taxon>
    </lineage>
</organism>